<proteinExistence type="inferred from homology"/>
<keyword id="KW-0001">2Fe-2S</keyword>
<keyword id="KW-0963">Cytoplasm</keyword>
<keyword id="KW-0408">Iron</keyword>
<keyword id="KW-0411">Iron-sulfur</keyword>
<keyword id="KW-0479">Metal-binding</keyword>
<keyword id="KW-0560">Oxidoreductase</keyword>
<protein>
    <recommendedName>
        <fullName evidence="1">Hydroxylamine reductase</fullName>
        <ecNumber evidence="1">1.7.99.1</ecNumber>
    </recommendedName>
    <alternativeName>
        <fullName evidence="1">Hybrid-cluster protein</fullName>
        <shortName evidence="1">HCP</shortName>
    </alternativeName>
    <alternativeName>
        <fullName evidence="1">Prismane protein</fullName>
    </alternativeName>
</protein>
<reference key="1">
    <citation type="journal article" date="2004" name="Proc. Natl. Acad. Sci. U.S.A.">
        <title>Insights into the evolution of Yersinia pestis through whole-genome comparison with Yersinia pseudotuberculosis.</title>
        <authorList>
            <person name="Chain P.S.G."/>
            <person name="Carniel E."/>
            <person name="Larimer F.W."/>
            <person name="Lamerdin J."/>
            <person name="Stoutland P.O."/>
            <person name="Regala W.M."/>
            <person name="Georgescu A.M."/>
            <person name="Vergez L.M."/>
            <person name="Land M.L."/>
            <person name="Motin V.L."/>
            <person name="Brubaker R.R."/>
            <person name="Fowler J."/>
            <person name="Hinnebusch J."/>
            <person name="Marceau M."/>
            <person name="Medigue C."/>
            <person name="Simonet M."/>
            <person name="Chenal-Francisque V."/>
            <person name="Souza B."/>
            <person name="Dacheux D."/>
            <person name="Elliott J.M."/>
            <person name="Derbise A."/>
            <person name="Hauser L.J."/>
            <person name="Garcia E."/>
        </authorList>
    </citation>
    <scope>NUCLEOTIDE SEQUENCE [LARGE SCALE GENOMIC DNA]</scope>
    <source>
        <strain>IP32953</strain>
    </source>
</reference>
<dbReference type="EC" id="1.7.99.1" evidence="1"/>
<dbReference type="EMBL" id="BX936398">
    <property type="protein sequence ID" value="CAH20626.1"/>
    <property type="molecule type" value="Genomic_DNA"/>
</dbReference>
<dbReference type="RefSeq" id="WP_011192048.1">
    <property type="nucleotide sequence ID" value="NC_006155.1"/>
</dbReference>
<dbReference type="SMR" id="Q66CL7"/>
<dbReference type="KEGG" id="ypo:BZ17_1133"/>
<dbReference type="KEGG" id="yps:YPTB1386"/>
<dbReference type="PATRIC" id="fig|273123.14.peg.1206"/>
<dbReference type="Proteomes" id="UP000001011">
    <property type="component" value="Chromosome"/>
</dbReference>
<dbReference type="GO" id="GO:0005737">
    <property type="term" value="C:cytoplasm"/>
    <property type="evidence" value="ECO:0007669"/>
    <property type="project" value="UniProtKB-SubCell"/>
</dbReference>
<dbReference type="GO" id="GO:0051537">
    <property type="term" value="F:2 iron, 2 sulfur cluster binding"/>
    <property type="evidence" value="ECO:0007669"/>
    <property type="project" value="UniProtKB-KW"/>
</dbReference>
<dbReference type="GO" id="GO:0050418">
    <property type="term" value="F:hydroxylamine reductase activity"/>
    <property type="evidence" value="ECO:0007669"/>
    <property type="project" value="UniProtKB-UniRule"/>
</dbReference>
<dbReference type="GO" id="GO:0046872">
    <property type="term" value="F:metal ion binding"/>
    <property type="evidence" value="ECO:0007669"/>
    <property type="project" value="UniProtKB-KW"/>
</dbReference>
<dbReference type="GO" id="GO:0004601">
    <property type="term" value="F:peroxidase activity"/>
    <property type="evidence" value="ECO:0007669"/>
    <property type="project" value="TreeGrafter"/>
</dbReference>
<dbReference type="GO" id="GO:0042542">
    <property type="term" value="P:response to hydrogen peroxide"/>
    <property type="evidence" value="ECO:0007669"/>
    <property type="project" value="TreeGrafter"/>
</dbReference>
<dbReference type="CDD" id="cd01914">
    <property type="entry name" value="HCP"/>
    <property type="match status" value="1"/>
</dbReference>
<dbReference type="FunFam" id="1.20.1270.20:FF:000001">
    <property type="entry name" value="Hydroxylamine reductase"/>
    <property type="match status" value="1"/>
</dbReference>
<dbReference type="FunFam" id="1.20.1270.20:FF:000002">
    <property type="entry name" value="Hydroxylamine reductase"/>
    <property type="match status" value="1"/>
</dbReference>
<dbReference type="FunFam" id="3.40.50.2030:FF:000001">
    <property type="entry name" value="Hydroxylamine reductase"/>
    <property type="match status" value="1"/>
</dbReference>
<dbReference type="FunFam" id="3.40.50.2030:FF:000002">
    <property type="entry name" value="Hydroxylamine reductase"/>
    <property type="match status" value="1"/>
</dbReference>
<dbReference type="Gene3D" id="1.20.1270.20">
    <property type="match status" value="2"/>
</dbReference>
<dbReference type="Gene3D" id="3.40.50.2030">
    <property type="match status" value="2"/>
</dbReference>
<dbReference type="HAMAP" id="MF_00069">
    <property type="entry name" value="Hydroxylam_reduct"/>
    <property type="match status" value="1"/>
</dbReference>
<dbReference type="InterPro" id="IPR004137">
    <property type="entry name" value="HCP/CODH"/>
</dbReference>
<dbReference type="InterPro" id="IPR010048">
    <property type="entry name" value="Hydroxylam_reduct"/>
</dbReference>
<dbReference type="InterPro" id="IPR016099">
    <property type="entry name" value="Prismane-like_a/b-sand"/>
</dbReference>
<dbReference type="InterPro" id="IPR011254">
    <property type="entry name" value="Prismane-like_sf"/>
</dbReference>
<dbReference type="InterPro" id="IPR016100">
    <property type="entry name" value="Prismane_a-bundle"/>
</dbReference>
<dbReference type="NCBIfam" id="TIGR01703">
    <property type="entry name" value="hybrid_clust"/>
    <property type="match status" value="1"/>
</dbReference>
<dbReference type="NCBIfam" id="NF003658">
    <property type="entry name" value="PRK05290.1"/>
    <property type="match status" value="1"/>
</dbReference>
<dbReference type="PANTHER" id="PTHR30109">
    <property type="entry name" value="HYDROXYLAMINE REDUCTASE"/>
    <property type="match status" value="1"/>
</dbReference>
<dbReference type="PANTHER" id="PTHR30109:SF0">
    <property type="entry name" value="HYDROXYLAMINE REDUCTASE"/>
    <property type="match status" value="1"/>
</dbReference>
<dbReference type="Pfam" id="PF03063">
    <property type="entry name" value="Prismane"/>
    <property type="match status" value="1"/>
</dbReference>
<dbReference type="PIRSF" id="PIRSF000076">
    <property type="entry name" value="HCP"/>
    <property type="match status" value="1"/>
</dbReference>
<dbReference type="SUPFAM" id="SSF56821">
    <property type="entry name" value="Prismane protein-like"/>
    <property type="match status" value="1"/>
</dbReference>
<gene>
    <name evidence="1" type="primary">hcp</name>
    <name type="ordered locus">YPTB1386</name>
</gene>
<feature type="chain" id="PRO_1000009184" description="Hydroxylamine reductase">
    <location>
        <begin position="1"/>
        <end position="550"/>
    </location>
</feature>
<feature type="binding site" evidence="1">
    <location>
        <position position="3"/>
    </location>
    <ligand>
        <name>[2Fe-2S] cluster</name>
        <dbReference type="ChEBI" id="CHEBI:190135"/>
    </ligand>
</feature>
<feature type="binding site" evidence="1">
    <location>
        <position position="6"/>
    </location>
    <ligand>
        <name>[2Fe-2S] cluster</name>
        <dbReference type="ChEBI" id="CHEBI:190135"/>
    </ligand>
</feature>
<feature type="binding site" evidence="1">
    <location>
        <position position="18"/>
    </location>
    <ligand>
        <name>[2Fe-2S] cluster</name>
        <dbReference type="ChEBI" id="CHEBI:190135"/>
    </ligand>
</feature>
<feature type="binding site" evidence="1">
    <location>
        <position position="25"/>
    </location>
    <ligand>
        <name>[2Fe-2S] cluster</name>
        <dbReference type="ChEBI" id="CHEBI:190135"/>
    </ligand>
</feature>
<feature type="binding site" evidence="1">
    <location>
        <position position="249"/>
    </location>
    <ligand>
        <name>hybrid [4Fe-2O-2S] cluster</name>
        <dbReference type="ChEBI" id="CHEBI:60519"/>
    </ligand>
</feature>
<feature type="binding site" evidence="1">
    <location>
        <position position="273"/>
    </location>
    <ligand>
        <name>hybrid [4Fe-2O-2S] cluster</name>
        <dbReference type="ChEBI" id="CHEBI:60519"/>
    </ligand>
</feature>
<feature type="binding site" evidence="1">
    <location>
        <position position="317"/>
    </location>
    <ligand>
        <name>hybrid [4Fe-2O-2S] cluster</name>
        <dbReference type="ChEBI" id="CHEBI:60519"/>
    </ligand>
</feature>
<feature type="binding site" description="via persulfide group" evidence="1">
    <location>
        <position position="405"/>
    </location>
    <ligand>
        <name>hybrid [4Fe-2O-2S] cluster</name>
        <dbReference type="ChEBI" id="CHEBI:60519"/>
    </ligand>
</feature>
<feature type="binding site" evidence="1">
    <location>
        <position position="433"/>
    </location>
    <ligand>
        <name>hybrid [4Fe-2O-2S] cluster</name>
        <dbReference type="ChEBI" id="CHEBI:60519"/>
    </ligand>
</feature>
<feature type="binding site" evidence="1">
    <location>
        <position position="458"/>
    </location>
    <ligand>
        <name>hybrid [4Fe-2O-2S] cluster</name>
        <dbReference type="ChEBI" id="CHEBI:60519"/>
    </ligand>
</feature>
<feature type="binding site" evidence="1">
    <location>
        <position position="492"/>
    </location>
    <ligand>
        <name>hybrid [4Fe-2O-2S] cluster</name>
        <dbReference type="ChEBI" id="CHEBI:60519"/>
    </ligand>
</feature>
<feature type="binding site" evidence="1">
    <location>
        <position position="494"/>
    </location>
    <ligand>
        <name>hybrid [4Fe-2O-2S] cluster</name>
        <dbReference type="ChEBI" id="CHEBI:60519"/>
    </ligand>
</feature>
<feature type="modified residue" description="Cysteine persulfide" evidence="1">
    <location>
        <position position="405"/>
    </location>
</feature>
<organism>
    <name type="scientific">Yersinia pseudotuberculosis serotype I (strain IP32953)</name>
    <dbReference type="NCBI Taxonomy" id="273123"/>
    <lineage>
        <taxon>Bacteria</taxon>
        <taxon>Pseudomonadati</taxon>
        <taxon>Pseudomonadota</taxon>
        <taxon>Gammaproteobacteria</taxon>
        <taxon>Enterobacterales</taxon>
        <taxon>Yersiniaceae</taxon>
        <taxon>Yersinia</taxon>
    </lineage>
</organism>
<name>HCP_YERPS</name>
<sequence length="550" mass="60400">MFCVQCEQTIRTPAGNGCSYAQGMCGKTAETSDLQDLLVAVLQGLSAWALQARELGIIDSQIDSFAPRAFFSTLTNVNFDSDRIVEYAKDAILLRHSLAVRCRLLDSTITVDHPLAELQLVADDIPSLLQQSQQFALNNDKADVGDDIHGLRMLCLYGLKGAAAYMEHAHVLGQSDEQIYAEYHAYMAWLGTQPRDVDTLLNNAMGIGKMNFNVMAILDQGETQAYGDPQPTSVNVRPVAGKAILISGHDLKDLHMLLEQTQGTGINIYTHGEMLPAHGYPELKRYPHLVGNYGSGWQNQQTEFAKFPGPILMTSNCIIDPNVGNYGDRIWTRSIVGWPGVNHLDGENFAPVIEQALGMAGFPYSELEHLITVGFGRQTLLNAADTVIDLVASKKLRHVFLVGGCDGSRTERSYFTDFARSVPQDCIIMTLACGKYRFNKLDFGTLEGLPRLLDVGQCNDAYAAIMLAVKLSEKLGCTVNDLPLSLVLSWFEQKAIVILLTLLSLGVKNIYTGPTAPGFLTDNLMAILYEKFGMQPITTVEQDMQAILGH</sequence>
<evidence type="ECO:0000255" key="1">
    <source>
        <dbReference type="HAMAP-Rule" id="MF_00069"/>
    </source>
</evidence>
<accession>Q66CL7</accession>
<comment type="function">
    <text evidence="1">Catalyzes the reduction of hydroxylamine to form NH(3) and H(2)O.</text>
</comment>
<comment type="catalytic activity">
    <reaction evidence="1">
        <text>A + NH4(+) + H2O = hydroxylamine + AH2 + H(+)</text>
        <dbReference type="Rhea" id="RHEA:22052"/>
        <dbReference type="ChEBI" id="CHEBI:13193"/>
        <dbReference type="ChEBI" id="CHEBI:15377"/>
        <dbReference type="ChEBI" id="CHEBI:15378"/>
        <dbReference type="ChEBI" id="CHEBI:15429"/>
        <dbReference type="ChEBI" id="CHEBI:17499"/>
        <dbReference type="ChEBI" id="CHEBI:28938"/>
        <dbReference type="EC" id="1.7.99.1"/>
    </reaction>
</comment>
<comment type="cofactor">
    <cofactor evidence="1">
        <name>[2Fe-2S] cluster</name>
        <dbReference type="ChEBI" id="CHEBI:190135"/>
    </cofactor>
    <text evidence="1">Binds 1 [2Fe-2S] cluster.</text>
</comment>
<comment type="cofactor">
    <cofactor evidence="1">
        <name>hybrid [4Fe-2O-2S] cluster</name>
        <dbReference type="ChEBI" id="CHEBI:60519"/>
    </cofactor>
    <text evidence="1">Binds 1 hybrid [4Fe-2O-2S] cluster.</text>
</comment>
<comment type="subcellular location">
    <subcellularLocation>
        <location evidence="1">Cytoplasm</location>
    </subcellularLocation>
</comment>
<comment type="similarity">
    <text evidence="1">Belongs to the HCP family.</text>
</comment>